<gene>
    <name evidence="4" type="primary">atg3</name>
    <name type="ORF">BofuT4_P076720.1</name>
</gene>
<proteinExistence type="evidence at protein level"/>
<feature type="chain" id="PRO_0000443870" description="Autophagy-related protein 3">
    <location>
        <begin position="1"/>
        <end position="363"/>
    </location>
</feature>
<feature type="region of interest" description="Disordered" evidence="2">
    <location>
        <begin position="84"/>
        <end position="174"/>
    </location>
</feature>
<feature type="region of interest" description="Flexible region" evidence="1">
    <location>
        <begin position="84"/>
        <end position="171"/>
    </location>
</feature>
<feature type="region of interest" description="Handle region" evidence="1">
    <location>
        <begin position="251"/>
        <end position="339"/>
    </location>
</feature>
<feature type="compositionally biased region" description="Basic and acidic residues" evidence="2">
    <location>
        <begin position="84"/>
        <end position="106"/>
    </location>
</feature>
<feature type="compositionally biased region" description="Basic and acidic residues" evidence="2">
    <location>
        <begin position="129"/>
        <end position="138"/>
    </location>
</feature>
<feature type="compositionally biased region" description="Acidic residues" evidence="2">
    <location>
        <begin position="139"/>
        <end position="164"/>
    </location>
</feature>
<feature type="active site" description="Glycyl thioester intermediate" evidence="1">
    <location>
        <position position="247"/>
    </location>
</feature>
<sequence>MNFLHSTLDRLREFTPVSNTSTFRTNGQITPEEFVAAGDYLVFKFPTWSWADASPTSKRANYLPAGKQFLVTRGVPCHRRLDDDFAGDAGHDETVVRDGEDFRGDGPHSPGDDEDGWLRTGGLAASQEARVRDVRTVDESGEMGEREDDEDDIPDMEDDDDDDEAIIRDPKADNASSSRRTYTIYIAYTPYYRTPRLYLSGYLSSSQPLPPHLMMEDIVGDYKDKTVTLEDFPYFSNNIKMASIHPCKHASVMKTLLDRADAALKLRREKQRQGKAVPGSKDTGMEGLVDDFEKTKIGDKKAVLEGLKAGGNGNDEWEVLQHDQDFANEEEEVAIRVDQYLVVFLKFMASVTPGIEHDFTMGV</sequence>
<comment type="function">
    <text evidence="1 3">E2 conjugating enzyme required for the cytoplasm to vacuole transport (Cvt) and autophagy (PubMed:29417220). Required for selective autophagic degradation of the nucleus (nucleophagy) as well as for mitophagy which contributes to regulate mitochondrial quantity and quality by eliminating the mitochondria to a basal level to fulfill cellular energy requirements and preventing excess ROS production (By similarity). Responsible for the E2-like covalent binding of phosphatidylethanolamine to the C-terminal Gly of atg8. The atg12-atg5 conjugate plays a role of an E3 and promotes the transfer of atg8 from atg3 to phosphatidylethanolamine (PE) (By similarity). This step is required for the membrane association of atg8. The formation of the atg8-phosphatidylethanolamine conjugate is essential for autophagy and for the cytoplasm to vacuole transport (Cvt) (By similarity). The atg8-PE conjugate mediates tethering between adjacent membranes and stimulates membrane hemifusion, leading to expansion of the autophagosomal membrane during autophagy (By similarity). Required for normal mycelial growth and conidiogenesis, and regulates sclerotial formation (PubMed:29417220). Plays an essential role in pathogenesis (PubMed:29417220).</text>
</comment>
<comment type="subunit">
    <text evidence="1 3">Monomer (By similarity). Interacts with atg8 through an intermediate thioester bond through the C-terminal Gly of atg8 (By similarity). Interacts with the C-terminal region of the E1-like atg7 enzyme (PubMed:29417220). Also interacts with the atg12-atg5 conjugate (By similarity).</text>
</comment>
<comment type="subcellular location">
    <subcellularLocation>
        <location evidence="3">Cytoplasm</location>
    </subcellularLocation>
</comment>
<comment type="domain">
    <text evidence="1">The N-terminal region is involved in phosphatidylethanolamine-binding and is required for atg8-PE conjugation (By similarity).</text>
</comment>
<comment type="domain">
    <text evidence="1">The flexible region (FR) is required for atg7-binding (By similarity).</text>
</comment>
<comment type="domain">
    <text evidence="1">The handle region (HR) contains the atg8 interaction motif (AIM) and mediates binding to atg8. It is crucial for the cytoplasm-to-vacuole targeting pathway (By similarity).</text>
</comment>
<comment type="disruption phenotype">
    <text evidence="3">Blocks the autophagic process (PubMed:29417220). Leads to fewer aerial hyphae and slower mycelial growth rate and fails to produce any conidia (PubMed:29417220). Also reduces the production of sclerotia in cold environment (PubMed:29417220). Fails to infect wounded cucumber leaves and shows only slight virulence on wounded tomato and grape fruits (PubMed:29417220).</text>
</comment>
<comment type="similarity">
    <text evidence="5">Belongs to the ATG3 family.</text>
</comment>
<accession>G2XNY3</accession>
<keyword id="KW-0072">Autophagy</keyword>
<keyword id="KW-0963">Cytoplasm</keyword>
<keyword id="KW-0653">Protein transport</keyword>
<keyword id="KW-1185">Reference proteome</keyword>
<keyword id="KW-0813">Transport</keyword>
<keyword id="KW-0833">Ubl conjugation pathway</keyword>
<evidence type="ECO:0000250" key="1">
    <source>
        <dbReference type="UniProtKB" id="P40344"/>
    </source>
</evidence>
<evidence type="ECO:0000256" key="2">
    <source>
        <dbReference type="SAM" id="MobiDB-lite"/>
    </source>
</evidence>
<evidence type="ECO:0000269" key="3">
    <source>
    </source>
</evidence>
<evidence type="ECO:0000303" key="4">
    <source>
    </source>
</evidence>
<evidence type="ECO:0000305" key="5"/>
<dbReference type="EMBL" id="FQ790246">
    <property type="protein sequence ID" value="CCD42589.1"/>
    <property type="molecule type" value="Genomic_DNA"/>
</dbReference>
<dbReference type="SMR" id="G2XNY3"/>
<dbReference type="FunCoup" id="G2XNY3">
    <property type="interactions" value="1019"/>
</dbReference>
<dbReference type="STRING" id="999810.G2XNY3"/>
<dbReference type="eggNOG" id="KOG2981">
    <property type="taxonomic scope" value="Eukaryota"/>
</dbReference>
<dbReference type="HOGENOM" id="CLU_027518_2_0_1"/>
<dbReference type="InParanoid" id="G2XNY3"/>
<dbReference type="OrthoDB" id="73349at5178"/>
<dbReference type="Proteomes" id="UP000008177">
    <property type="component" value="Unplaced contigs"/>
</dbReference>
<dbReference type="GO" id="GO:0005829">
    <property type="term" value="C:cytosol"/>
    <property type="evidence" value="ECO:0007669"/>
    <property type="project" value="TreeGrafter"/>
</dbReference>
<dbReference type="GO" id="GO:0000407">
    <property type="term" value="C:phagophore assembly site"/>
    <property type="evidence" value="ECO:0007669"/>
    <property type="project" value="TreeGrafter"/>
</dbReference>
<dbReference type="GO" id="GO:0019776">
    <property type="term" value="F:Atg8-family ligase activity"/>
    <property type="evidence" value="ECO:0007669"/>
    <property type="project" value="TreeGrafter"/>
</dbReference>
<dbReference type="GO" id="GO:0000045">
    <property type="term" value="P:autophagosome assembly"/>
    <property type="evidence" value="ECO:0007669"/>
    <property type="project" value="TreeGrafter"/>
</dbReference>
<dbReference type="GO" id="GO:0000422">
    <property type="term" value="P:autophagy of mitochondrion"/>
    <property type="evidence" value="ECO:0007669"/>
    <property type="project" value="TreeGrafter"/>
</dbReference>
<dbReference type="GO" id="GO:0061723">
    <property type="term" value="P:glycophagy"/>
    <property type="evidence" value="ECO:0007669"/>
    <property type="project" value="TreeGrafter"/>
</dbReference>
<dbReference type="GO" id="GO:0044804">
    <property type="term" value="P:nucleophagy"/>
    <property type="evidence" value="ECO:0007669"/>
    <property type="project" value="TreeGrafter"/>
</dbReference>
<dbReference type="GO" id="GO:0015031">
    <property type="term" value="P:protein transport"/>
    <property type="evidence" value="ECO:0007669"/>
    <property type="project" value="UniProtKB-KW"/>
</dbReference>
<dbReference type="InterPro" id="IPR007135">
    <property type="entry name" value="Atg3/Atg10"/>
</dbReference>
<dbReference type="PANTHER" id="PTHR12866">
    <property type="entry name" value="UBIQUITIN-LIKE-CONJUGATING ENZYME ATG3"/>
    <property type="match status" value="1"/>
</dbReference>
<dbReference type="PANTHER" id="PTHR12866:SF2">
    <property type="entry name" value="UBIQUITIN-LIKE-CONJUGATING ENZYME ATG3"/>
    <property type="match status" value="1"/>
</dbReference>
<dbReference type="Pfam" id="PF03987">
    <property type="entry name" value="Autophagy_act_C"/>
    <property type="match status" value="1"/>
</dbReference>
<reference key="1">
    <citation type="journal article" date="2011" name="PLoS Genet.">
        <title>Genomic analysis of the necrotrophic fungal pathogens Sclerotinia sclerotiorum and Botrytis cinerea.</title>
        <authorList>
            <person name="Amselem J."/>
            <person name="Cuomo C.A."/>
            <person name="van Kan J.A.L."/>
            <person name="Viaud M."/>
            <person name="Benito E.P."/>
            <person name="Couloux A."/>
            <person name="Coutinho P.M."/>
            <person name="de Vries R.P."/>
            <person name="Dyer P.S."/>
            <person name="Fillinger S."/>
            <person name="Fournier E."/>
            <person name="Gout L."/>
            <person name="Hahn M."/>
            <person name="Kohn L."/>
            <person name="Lapalu N."/>
            <person name="Plummer K.M."/>
            <person name="Pradier J.-M."/>
            <person name="Quevillon E."/>
            <person name="Sharon A."/>
            <person name="Simon A."/>
            <person name="ten Have A."/>
            <person name="Tudzynski B."/>
            <person name="Tudzynski P."/>
            <person name="Wincker P."/>
            <person name="Andrew M."/>
            <person name="Anthouard V."/>
            <person name="Beever R.E."/>
            <person name="Beffa R."/>
            <person name="Benoit I."/>
            <person name="Bouzid O."/>
            <person name="Brault B."/>
            <person name="Chen Z."/>
            <person name="Choquer M."/>
            <person name="Collemare J."/>
            <person name="Cotton P."/>
            <person name="Danchin E.G."/>
            <person name="Da Silva C."/>
            <person name="Gautier A."/>
            <person name="Giraud C."/>
            <person name="Giraud T."/>
            <person name="Gonzalez C."/>
            <person name="Grossetete S."/>
            <person name="Gueldener U."/>
            <person name="Henrissat B."/>
            <person name="Howlett B.J."/>
            <person name="Kodira C."/>
            <person name="Kretschmer M."/>
            <person name="Lappartient A."/>
            <person name="Leroch M."/>
            <person name="Levis C."/>
            <person name="Mauceli E."/>
            <person name="Neuveglise C."/>
            <person name="Oeser B."/>
            <person name="Pearson M."/>
            <person name="Poulain J."/>
            <person name="Poussereau N."/>
            <person name="Quesneville H."/>
            <person name="Rascle C."/>
            <person name="Schumacher J."/>
            <person name="Segurens B."/>
            <person name="Sexton A."/>
            <person name="Silva E."/>
            <person name="Sirven C."/>
            <person name="Soanes D.M."/>
            <person name="Talbot N.J."/>
            <person name="Templeton M."/>
            <person name="Yandava C."/>
            <person name="Yarden O."/>
            <person name="Zeng Q."/>
            <person name="Rollins J.A."/>
            <person name="Lebrun M.-H."/>
            <person name="Dickman M."/>
        </authorList>
    </citation>
    <scope>NUCLEOTIDE SEQUENCE [LARGE SCALE GENOMIC DNA]</scope>
    <source>
        <strain>T4</strain>
    </source>
</reference>
<reference key="2">
    <citation type="journal article" date="2018" name="Curr. Genet.">
        <title>Ubiquitin-like activating enzymes BcAtg3 and BcAtg7 participate in development and pathogenesis of Botrytis cinerea.</title>
        <authorList>
            <person name="Ren W."/>
            <person name="Sang C."/>
            <person name="Shi D."/>
            <person name="Song X."/>
            <person name="Zhou M."/>
            <person name="Chen C."/>
        </authorList>
    </citation>
    <scope>FUNCTION</scope>
    <scope>DISRUPTION PHENOTYPE</scope>
    <scope>INTERACTION WITH ATG7</scope>
    <scope>SUBCELLULAR LOCATION</scope>
</reference>
<organism>
    <name type="scientific">Botryotinia fuckeliana (strain T4)</name>
    <name type="common">Noble rot fungus</name>
    <name type="synonym">Botrytis cinerea</name>
    <dbReference type="NCBI Taxonomy" id="999810"/>
    <lineage>
        <taxon>Eukaryota</taxon>
        <taxon>Fungi</taxon>
        <taxon>Dikarya</taxon>
        <taxon>Ascomycota</taxon>
        <taxon>Pezizomycotina</taxon>
        <taxon>Leotiomycetes</taxon>
        <taxon>Helotiales</taxon>
        <taxon>Sclerotiniaceae</taxon>
        <taxon>Botrytis</taxon>
    </lineage>
</organism>
<name>ATG3_BOTF4</name>
<protein>
    <recommendedName>
        <fullName evidence="4">Autophagy-related protein 3</fullName>
    </recommendedName>
    <alternativeName>
        <fullName evidence="4">Autophagy-related E2-like conjugation enzyme atg3</fullName>
    </alternativeName>
</protein>